<comment type="function">
    <text evidence="1">Transfers a succinyl group from succinyl-CoA to L-homoserine, forming succinyl-L-homoserine.</text>
</comment>
<comment type="catalytic activity">
    <reaction evidence="1">
        <text>L-homoserine + succinyl-CoA = O-succinyl-L-homoserine + CoA</text>
        <dbReference type="Rhea" id="RHEA:22008"/>
        <dbReference type="ChEBI" id="CHEBI:57287"/>
        <dbReference type="ChEBI" id="CHEBI:57292"/>
        <dbReference type="ChEBI" id="CHEBI:57476"/>
        <dbReference type="ChEBI" id="CHEBI:57661"/>
        <dbReference type="EC" id="2.3.1.46"/>
    </reaction>
</comment>
<comment type="pathway">
    <text evidence="1">Amino-acid biosynthesis; L-methionine biosynthesis via de novo pathway; O-succinyl-L-homoserine from L-homoserine: step 1/1.</text>
</comment>
<comment type="subunit">
    <text evidence="1">Homodimer.</text>
</comment>
<comment type="subcellular location">
    <subcellularLocation>
        <location evidence="1">Cytoplasm</location>
    </subcellularLocation>
</comment>
<comment type="similarity">
    <text evidence="1">Belongs to the AB hydrolase superfamily. MetX family.</text>
</comment>
<sequence length="386" mass="43317">MSFPADSVGLVTPQKFQFEEPLHLECGRVLPRFELMVETYGTLNADKSNAILICHALSGHHHAAGYHHEDDKKAGWWDSCIGPGKAIDTNKFFVVALNNIGGCSGSTGPTSPNPENDNRPYGPDFPLVTVRDWVKTQAMLSDRLGISVWYAVVGGSLGGMQALQWSVDYPDRLQKCVVIASAPKLSAQNIAFNEVARQSILSDPDFHHGRYLENDSYPKRGLILARMVGHITYLSEEAMKQKFGRDLKSGKFMYGFDVEFQVESYLRYQGEQFSRNFDANTYLIMTKALDYFDPSREYGHSLTEAMSKTKCQFLIVSFTTDWRFAPSRSQEIVDALITNHKPVSYLDIDAEQGHDSFLFPIPLYVKTLRAFLGGEEHLKSTSLEAS</sequence>
<organism>
    <name type="scientific">Acinetobacter baumannii (strain ATCC 17978 / DSM 105126 / CIP 53.77 / LMG 1025 / NCDC KC755 / 5377)</name>
    <dbReference type="NCBI Taxonomy" id="400667"/>
    <lineage>
        <taxon>Bacteria</taxon>
        <taxon>Pseudomonadati</taxon>
        <taxon>Pseudomonadota</taxon>
        <taxon>Gammaproteobacteria</taxon>
        <taxon>Moraxellales</taxon>
        <taxon>Moraxellaceae</taxon>
        <taxon>Acinetobacter</taxon>
        <taxon>Acinetobacter calcoaceticus/baumannii complex</taxon>
    </lineage>
</organism>
<protein>
    <recommendedName>
        <fullName evidence="1">Homoserine O-succinyltransferase</fullName>
        <shortName evidence="1">HST</shortName>
        <ecNumber evidence="1">2.3.1.46</ecNumber>
    </recommendedName>
    <alternativeName>
        <fullName evidence="1">Homoserine transsuccinylase</fullName>
        <shortName evidence="1">HTS</shortName>
    </alternativeName>
</protein>
<gene>
    <name evidence="1" type="primary">metXS</name>
    <name type="ordered locus">A1S_0471</name>
</gene>
<proteinExistence type="inferred from homology"/>
<evidence type="ECO:0000255" key="1">
    <source>
        <dbReference type="HAMAP-Rule" id="MF_00296"/>
    </source>
</evidence>
<accession>A3M1Y2</accession>
<feature type="chain" id="PRO_1000115207" description="Homoserine O-succinyltransferase">
    <location>
        <begin position="1"/>
        <end position="386"/>
    </location>
</feature>
<feature type="domain" description="AB hydrolase-1" evidence="1">
    <location>
        <begin position="49"/>
        <end position="358"/>
    </location>
</feature>
<feature type="active site" description="Nucleophile" evidence="1">
    <location>
        <position position="156"/>
    </location>
</feature>
<feature type="active site" evidence="1">
    <location>
        <position position="321"/>
    </location>
</feature>
<feature type="active site" evidence="1">
    <location>
        <position position="354"/>
    </location>
</feature>
<feature type="binding site" evidence="1">
    <location>
        <position position="226"/>
    </location>
    <ligand>
        <name>substrate</name>
    </ligand>
</feature>
<feature type="binding site" evidence="1">
    <location>
        <position position="355"/>
    </location>
    <ligand>
        <name>substrate</name>
    </ligand>
</feature>
<feature type="site" description="Important for acyl-CoA specificity" evidence="1">
    <location>
        <position position="323"/>
    </location>
</feature>
<dbReference type="EC" id="2.3.1.46" evidence="1"/>
<dbReference type="EMBL" id="CP000521">
    <property type="protein sequence ID" value="ABO10926.2"/>
    <property type="molecule type" value="Genomic_DNA"/>
</dbReference>
<dbReference type="SMR" id="A3M1Y2"/>
<dbReference type="ESTHER" id="acib3-metx">
    <property type="family name" value="Homoserine_transacetylase"/>
</dbReference>
<dbReference type="KEGG" id="acb:A1S_0471"/>
<dbReference type="HOGENOM" id="CLU_028760_1_2_6"/>
<dbReference type="UniPathway" id="UPA00051">
    <property type="reaction ID" value="UER00075"/>
</dbReference>
<dbReference type="GO" id="GO:0005737">
    <property type="term" value="C:cytoplasm"/>
    <property type="evidence" value="ECO:0007669"/>
    <property type="project" value="UniProtKB-SubCell"/>
</dbReference>
<dbReference type="GO" id="GO:0004414">
    <property type="term" value="F:homoserine O-acetyltransferase activity"/>
    <property type="evidence" value="ECO:0007669"/>
    <property type="project" value="TreeGrafter"/>
</dbReference>
<dbReference type="GO" id="GO:0008899">
    <property type="term" value="F:homoserine O-succinyltransferase activity"/>
    <property type="evidence" value="ECO:0007669"/>
    <property type="project" value="UniProtKB-UniRule"/>
</dbReference>
<dbReference type="GO" id="GO:0009092">
    <property type="term" value="P:homoserine metabolic process"/>
    <property type="evidence" value="ECO:0007669"/>
    <property type="project" value="TreeGrafter"/>
</dbReference>
<dbReference type="GO" id="GO:0009086">
    <property type="term" value="P:methionine biosynthetic process"/>
    <property type="evidence" value="ECO:0007669"/>
    <property type="project" value="UniProtKB-UniRule"/>
</dbReference>
<dbReference type="FunFam" id="1.10.1740.110:FF:000001">
    <property type="entry name" value="Homoserine O-acetyltransferase"/>
    <property type="match status" value="1"/>
</dbReference>
<dbReference type="Gene3D" id="1.10.1740.110">
    <property type="match status" value="1"/>
</dbReference>
<dbReference type="Gene3D" id="3.40.50.1820">
    <property type="entry name" value="alpha/beta hydrolase"/>
    <property type="match status" value="1"/>
</dbReference>
<dbReference type="HAMAP" id="MF_00296">
    <property type="entry name" value="MetX_acyltransf"/>
    <property type="match status" value="1"/>
</dbReference>
<dbReference type="InterPro" id="IPR000073">
    <property type="entry name" value="AB_hydrolase_1"/>
</dbReference>
<dbReference type="InterPro" id="IPR029058">
    <property type="entry name" value="AB_hydrolase_fold"/>
</dbReference>
<dbReference type="InterPro" id="IPR008220">
    <property type="entry name" value="HAT_MetX-like"/>
</dbReference>
<dbReference type="NCBIfam" id="TIGR01392">
    <property type="entry name" value="homoserO_Ac_trn"/>
    <property type="match status" value="1"/>
</dbReference>
<dbReference type="NCBIfam" id="NF001209">
    <property type="entry name" value="PRK00175.1"/>
    <property type="match status" value="1"/>
</dbReference>
<dbReference type="PANTHER" id="PTHR32268">
    <property type="entry name" value="HOMOSERINE O-ACETYLTRANSFERASE"/>
    <property type="match status" value="1"/>
</dbReference>
<dbReference type="PANTHER" id="PTHR32268:SF11">
    <property type="entry name" value="HOMOSERINE O-ACETYLTRANSFERASE"/>
    <property type="match status" value="1"/>
</dbReference>
<dbReference type="Pfam" id="PF00561">
    <property type="entry name" value="Abhydrolase_1"/>
    <property type="match status" value="1"/>
</dbReference>
<dbReference type="PIRSF" id="PIRSF000443">
    <property type="entry name" value="Homoser_Ac_trans"/>
    <property type="match status" value="1"/>
</dbReference>
<dbReference type="SUPFAM" id="SSF53474">
    <property type="entry name" value="alpha/beta-Hydrolases"/>
    <property type="match status" value="1"/>
</dbReference>
<keyword id="KW-0012">Acyltransferase</keyword>
<keyword id="KW-0028">Amino-acid biosynthesis</keyword>
<keyword id="KW-0963">Cytoplasm</keyword>
<keyword id="KW-0486">Methionine biosynthesis</keyword>
<keyword id="KW-0808">Transferase</keyword>
<reference key="1">
    <citation type="journal article" date="2007" name="Genes Dev.">
        <title>New insights into Acinetobacter baumannii pathogenesis revealed by high-density pyrosequencing and transposon mutagenesis.</title>
        <authorList>
            <person name="Smith M.G."/>
            <person name="Gianoulis T.A."/>
            <person name="Pukatzki S."/>
            <person name="Mekalanos J.J."/>
            <person name="Ornston L.N."/>
            <person name="Gerstein M."/>
            <person name="Snyder M."/>
        </authorList>
    </citation>
    <scope>NUCLEOTIDE SEQUENCE [LARGE SCALE GENOMIC DNA]</scope>
    <source>
        <strain>ATCC 17978 / DSM 105126 / CIP 53.77 / LMG 1025 / NCDC KC755 / 5377</strain>
    </source>
</reference>
<name>METXS_ACIBT</name>